<name>HAUS6_DANRE</name>
<protein>
    <recommendedName>
        <fullName>HAUS augmin-like complex subunit 6</fullName>
    </recommendedName>
</protein>
<sequence length="794" mass="89608">MSKLKKTDGKYLWWCLLCLKFKPDNVSVTKTTKHLNLGMNMFDKPNKEAFYIVIHFLFNKLNPTRAQDVFRNCWLVWDHKSDAEFRKVAFAWLQEIANEEGSAFPKVAASHLLSAFGPKFINLMLHLAKHVMLKTMKTFNTDGMWVPEAAAVPASSEEMELKRFQLVKRQFQRVTVEQDFLIQDYQKRAKVLEKSLRDLDAENAKYDSLLKEHDSITDLKEVILAKVQKLRGLWNEVDRFLSNHQGKRDIVASVINGQVDQYILCGQELNVKMPAALRERMERPSHQSSAVRLYEGGQPVLVRLLALLNEGLHVLREEREKIVGPSVQLQNQDVQEHALLFTRSKENLNLIRWKLVKEDAAEIKVSIGKLEEEWECKWANCLKNTPLTCFLEEDPVLDLVSPMVALSFEPASEASFQASVISQYPCKPHDLLEQPSKEKLDTTVAVVHLEQEVHLKPEIKISSVATEDQDVLVPSDSCFSPEHVTCGTPPCETILSVIETPSPKQPCHTNLHSKPKASVLKTKAQILDLECDNLASQFADAVIMSPGNQRSDVDLGQLLNAISDPFSSRKQLCRTPESLIKDVRSSWRKAVEEGLAEKKQASWNQQDSLSWLKTPMANMNSPCKTLNLESSMSFSTNLDNCTSPPVQQGSTLHSTLSWDSSQMEVLTSQCSSDVIKFSIAQEEPPDLFDVSFNSDSSVENSGEKARDEELCLPSVGLCYLDETPQLTEQLCLGASSDKSVFKDSPVHLSMSKDLSHWTTDHFSLDLDRLESLSSPPRAENLTLPNLVNVNLDEY</sequence>
<organism>
    <name type="scientific">Danio rerio</name>
    <name type="common">Zebrafish</name>
    <name type="synonym">Brachydanio rerio</name>
    <dbReference type="NCBI Taxonomy" id="7955"/>
    <lineage>
        <taxon>Eukaryota</taxon>
        <taxon>Metazoa</taxon>
        <taxon>Chordata</taxon>
        <taxon>Craniata</taxon>
        <taxon>Vertebrata</taxon>
        <taxon>Euteleostomi</taxon>
        <taxon>Actinopterygii</taxon>
        <taxon>Neopterygii</taxon>
        <taxon>Teleostei</taxon>
        <taxon>Ostariophysi</taxon>
        <taxon>Cypriniformes</taxon>
        <taxon>Danionidae</taxon>
        <taxon>Danioninae</taxon>
        <taxon>Danio</taxon>
    </lineage>
</organism>
<accession>A0JMF7</accession>
<feature type="chain" id="PRO_0000360990" description="HAUS augmin-like complex subunit 6">
    <location>
        <begin position="1"/>
        <end position="794"/>
    </location>
</feature>
<comment type="function">
    <text evidence="1">Contributes to mitotic spindle assembly, maintenance of centrosome integrity and completion of cytokinesis as part of the HAUS augmin-like complex. Promotes the nucleation of microtubules from the spindle through recruitment of NEDD1 and gamma-tubulin (By similarity).</text>
</comment>
<comment type="subunit">
    <text evidence="2">Component of the HAUS augmin-like complex. The complex interacts with the gamma-tubulin ring complex and this interaction is required for spindle assembly (By similarity).</text>
</comment>
<comment type="subcellular location">
    <subcellularLocation>
        <location evidence="2">Cytoplasm</location>
        <location evidence="2">Cytoskeleton</location>
    </subcellularLocation>
    <subcellularLocation>
        <location evidence="2">Cytoplasm</location>
        <location evidence="2">Cytoskeleton</location>
        <location evidence="2">Spindle</location>
    </subcellularLocation>
    <subcellularLocation>
        <location evidence="2">Cytoplasm</location>
        <location evidence="2">Cytoskeleton</location>
        <location evidence="2">Microtubule organizing center</location>
        <location evidence="2">Centrosome</location>
    </subcellularLocation>
    <text evidence="2">Localizes to interphase centrosomes and to mitotic spindle microtubules.</text>
</comment>
<comment type="similarity">
    <text evidence="3">Belongs to the HAUS6 family.</text>
</comment>
<keyword id="KW-0131">Cell cycle</keyword>
<keyword id="KW-0132">Cell division</keyword>
<keyword id="KW-0963">Cytoplasm</keyword>
<keyword id="KW-0206">Cytoskeleton</keyword>
<keyword id="KW-0493">Microtubule</keyword>
<keyword id="KW-0498">Mitosis</keyword>
<keyword id="KW-1185">Reference proteome</keyword>
<proteinExistence type="evidence at transcript level"/>
<evidence type="ECO:0000250" key="1"/>
<evidence type="ECO:0000250" key="2">
    <source>
        <dbReference type="UniProtKB" id="Q7Z4H7"/>
    </source>
</evidence>
<evidence type="ECO:0000305" key="3"/>
<dbReference type="EMBL" id="BC125861">
    <property type="protein sequence ID" value="AAI25862.1"/>
    <property type="molecule type" value="mRNA"/>
</dbReference>
<dbReference type="RefSeq" id="NP_001073443.1">
    <property type="nucleotide sequence ID" value="NM_001079974.1"/>
</dbReference>
<dbReference type="SMR" id="A0JMF7"/>
<dbReference type="FunCoup" id="A0JMF7">
    <property type="interactions" value="1608"/>
</dbReference>
<dbReference type="STRING" id="7955.ENSDARP00000138489"/>
<dbReference type="PaxDb" id="7955-ENSDARP00000089274"/>
<dbReference type="PeptideAtlas" id="A0JMF7"/>
<dbReference type="GeneID" id="558814"/>
<dbReference type="KEGG" id="dre:558814"/>
<dbReference type="AGR" id="ZFIN:ZDB-GENE-030131-5517"/>
<dbReference type="CTD" id="54801"/>
<dbReference type="ZFIN" id="ZDB-GENE-030131-5517">
    <property type="gene designation" value="haus6"/>
</dbReference>
<dbReference type="eggNOG" id="ENOG502QV4W">
    <property type="taxonomic scope" value="Eukaryota"/>
</dbReference>
<dbReference type="InParanoid" id="A0JMF7"/>
<dbReference type="OrthoDB" id="5575722at2759"/>
<dbReference type="PhylomeDB" id="A0JMF7"/>
<dbReference type="PRO" id="PR:A0JMF7"/>
<dbReference type="Proteomes" id="UP000000437">
    <property type="component" value="Chromosome 7"/>
</dbReference>
<dbReference type="GO" id="GO:0005813">
    <property type="term" value="C:centrosome"/>
    <property type="evidence" value="ECO:0007669"/>
    <property type="project" value="UniProtKB-SubCell"/>
</dbReference>
<dbReference type="GO" id="GO:0005737">
    <property type="term" value="C:cytoplasm"/>
    <property type="evidence" value="ECO:0007669"/>
    <property type="project" value="UniProtKB-KW"/>
</dbReference>
<dbReference type="GO" id="GO:0070652">
    <property type="term" value="C:HAUS complex"/>
    <property type="evidence" value="ECO:0000250"/>
    <property type="project" value="UniProtKB"/>
</dbReference>
<dbReference type="GO" id="GO:1990498">
    <property type="term" value="C:mitotic spindle microtubule"/>
    <property type="evidence" value="ECO:0000250"/>
    <property type="project" value="UniProtKB"/>
</dbReference>
<dbReference type="GO" id="GO:0008017">
    <property type="term" value="F:microtubule binding"/>
    <property type="evidence" value="ECO:0000318"/>
    <property type="project" value="GO_Central"/>
</dbReference>
<dbReference type="GO" id="GO:0051301">
    <property type="term" value="P:cell division"/>
    <property type="evidence" value="ECO:0007669"/>
    <property type="project" value="UniProtKB-KW"/>
</dbReference>
<dbReference type="GO" id="GO:0007098">
    <property type="term" value="P:centrosome cycle"/>
    <property type="evidence" value="ECO:0000250"/>
    <property type="project" value="UniProtKB"/>
</dbReference>
<dbReference type="GO" id="GO:0000226">
    <property type="term" value="P:microtubule cytoskeleton organization"/>
    <property type="evidence" value="ECO:0000318"/>
    <property type="project" value="GO_Central"/>
</dbReference>
<dbReference type="GO" id="GO:0051225">
    <property type="term" value="P:spindle assembly"/>
    <property type="evidence" value="ECO:0000250"/>
    <property type="project" value="UniProtKB"/>
</dbReference>
<dbReference type="InterPro" id="IPR026797">
    <property type="entry name" value="HAUS_6"/>
</dbReference>
<dbReference type="InterPro" id="IPR028163">
    <property type="entry name" value="HAUS_6_N"/>
</dbReference>
<dbReference type="PANTHER" id="PTHR16151">
    <property type="entry name" value="HAUS AUGMIN-LIKE COMPLEX SUBUNIT 6"/>
    <property type="match status" value="1"/>
</dbReference>
<dbReference type="PANTHER" id="PTHR16151:SF2">
    <property type="entry name" value="HAUS AUGMIN-LIKE COMPLEX SUBUNIT 6"/>
    <property type="match status" value="1"/>
</dbReference>
<dbReference type="Pfam" id="PF14661">
    <property type="entry name" value="HAUS6_N"/>
    <property type="match status" value="1"/>
</dbReference>
<gene>
    <name type="primary">haus6</name>
    <name type="synonym">fam29a</name>
    <name type="ORF">zgc:153242</name>
</gene>
<reference key="1">
    <citation type="submission" date="2006-10" db="EMBL/GenBank/DDBJ databases">
        <authorList>
            <consortium name="NIH - Zebrafish Gene Collection (ZGC) project"/>
        </authorList>
    </citation>
    <scope>NUCLEOTIDE SEQUENCE [LARGE SCALE MRNA]</scope>
    <source>
        <tissue>Embryo</tissue>
    </source>
</reference>